<sequence>MPINKSEKPESCDNVKVVVRCRPLNEREKSMCYKQAVSVDEMRGTITVHKTDSSNEPPKTFTFDTVFGPESKQLDVYNLTARPIIDSVLEGYNGTIFAYGQTGTGKTFTMEGVRAIPELRGIIPNSFAHIFGHIAKAEGDTRFLVRVSYLEIYNEEVRDLLGKDQTQRLEVKERPDVGVYIKDLSAYVVNNADDMDRIMTLGHKNRSVGATNMNEHSSRSHAIFTITIECSEKGIDGNMHVRMGKLHLVDLAGSERQAKTGATGQRLKEATKINLSLSTLGNVISALVDGKSTHVPYRNSKLTRLLQDSLGGNSKTMMCANIGPADYNYDETISTLRYANRAKNIKNKARINEDPKDALLRQFQKEIEELKKKLEEGEEISGSDISGSEEDDDEEGEVGEDGEKRKKRRGKKKVSPDKMIEMQAKIDEERKALETKLDMEEEERNKARAELEKREKDLLKAQQEHQSLLEKLSALEKKVIVGGVDLLAKAEEQEKLLEESNMELEERRKRAEQLRRELEEKEQERLDIEEKYTSLQEEAQGKTKKLKKVWTMLMAAKSEMADLQQEHQREIEGLLENIRQLSRELRLQMLIIDNFIPRDYQEMIENYVHWNEDIGEWQLKCVAYTGNNMRKQTPVPDKKEKDPFEVDLSHVYLAYTEESLRQSLMKLERPRTSKGKARPKTGRRKRSAKPETVIDSLLQ</sequence>
<keyword id="KW-0067">ATP-binding</keyword>
<keyword id="KW-0966">Cell projection</keyword>
<keyword id="KW-0969">Cilium</keyword>
<keyword id="KW-0970">Cilium biogenesis/degradation</keyword>
<keyword id="KW-0175">Coiled coil</keyword>
<keyword id="KW-0963">Cytoplasm</keyword>
<keyword id="KW-0206">Cytoskeleton</keyword>
<keyword id="KW-0493">Microtubule</keyword>
<keyword id="KW-0505">Motor protein</keyword>
<keyword id="KW-0547">Nucleotide-binding</keyword>
<keyword id="KW-0597">Phosphoprotein</keyword>
<keyword id="KW-1267">Proteomics identification</keyword>
<keyword id="KW-1185">Reference proteome</keyword>
<protein>
    <recommendedName>
        <fullName>Kinesin-like protein KIF3A</fullName>
    </recommendedName>
    <alternativeName>
        <fullName>Microtubule plus end-directed kinesin motor 3A</fullName>
    </alternativeName>
</protein>
<reference key="1">
    <citation type="journal article" date="1999" name="Exp. Eye Res.">
        <title>Photoreceptor localization of the KIF3A and KIF3B subunits of the heterotrimeric microtubule motor kinesin II in vertebrate retina.</title>
        <authorList>
            <person name="Whitehead J.L."/>
            <person name="Wang S.Y."/>
            <person name="Bost-Usinger L."/>
            <person name="Hoang E."/>
            <person name="Frazer K.A."/>
            <person name="Burnside B."/>
        </authorList>
    </citation>
    <scope>NUCLEOTIDE SEQUENCE [MRNA]</scope>
    <source>
        <tissue>Retina</tissue>
    </source>
</reference>
<reference key="2">
    <citation type="submission" date="2005-03" db="EMBL/GenBank/DDBJ databases">
        <authorList>
            <person name="Totoki Y."/>
            <person name="Toyoda A."/>
            <person name="Takeda T."/>
            <person name="Sakaki Y."/>
            <person name="Tanaka A."/>
            <person name="Yokoyama S."/>
            <person name="Ohara O."/>
            <person name="Nagase T."/>
            <person name="Kikuno R.F."/>
        </authorList>
    </citation>
    <scope>NUCLEOTIDE SEQUENCE [LARGE SCALE MRNA]</scope>
    <source>
        <tissue>Brain</tissue>
    </source>
</reference>
<reference key="3">
    <citation type="journal article" date="2004" name="Nature">
        <title>The DNA sequence and comparative analysis of human chromosome 5.</title>
        <authorList>
            <person name="Schmutz J."/>
            <person name="Martin J."/>
            <person name="Terry A."/>
            <person name="Couronne O."/>
            <person name="Grimwood J."/>
            <person name="Lowry S."/>
            <person name="Gordon L.A."/>
            <person name="Scott D."/>
            <person name="Xie G."/>
            <person name="Huang W."/>
            <person name="Hellsten U."/>
            <person name="Tran-Gyamfi M."/>
            <person name="She X."/>
            <person name="Prabhakar S."/>
            <person name="Aerts A."/>
            <person name="Altherr M."/>
            <person name="Bajorek E."/>
            <person name="Black S."/>
            <person name="Branscomb E."/>
            <person name="Caoile C."/>
            <person name="Challacombe J.F."/>
            <person name="Chan Y.M."/>
            <person name="Denys M."/>
            <person name="Detter J.C."/>
            <person name="Escobar J."/>
            <person name="Flowers D."/>
            <person name="Fotopulos D."/>
            <person name="Glavina T."/>
            <person name="Gomez M."/>
            <person name="Gonzales E."/>
            <person name="Goodstein D."/>
            <person name="Grigoriev I."/>
            <person name="Groza M."/>
            <person name="Hammon N."/>
            <person name="Hawkins T."/>
            <person name="Haydu L."/>
            <person name="Israni S."/>
            <person name="Jett J."/>
            <person name="Kadner K."/>
            <person name="Kimball H."/>
            <person name="Kobayashi A."/>
            <person name="Lopez F."/>
            <person name="Lou Y."/>
            <person name="Martinez D."/>
            <person name="Medina C."/>
            <person name="Morgan J."/>
            <person name="Nandkeshwar R."/>
            <person name="Noonan J.P."/>
            <person name="Pitluck S."/>
            <person name="Pollard M."/>
            <person name="Predki P."/>
            <person name="Priest J."/>
            <person name="Ramirez L."/>
            <person name="Retterer J."/>
            <person name="Rodriguez A."/>
            <person name="Rogers S."/>
            <person name="Salamov A."/>
            <person name="Salazar A."/>
            <person name="Thayer N."/>
            <person name="Tice H."/>
            <person name="Tsai M."/>
            <person name="Ustaszewska A."/>
            <person name="Vo N."/>
            <person name="Wheeler J."/>
            <person name="Wu K."/>
            <person name="Yang J."/>
            <person name="Dickson M."/>
            <person name="Cheng J.-F."/>
            <person name="Eichler E.E."/>
            <person name="Olsen A."/>
            <person name="Pennacchio L.A."/>
            <person name="Rokhsar D.S."/>
            <person name="Richardson P."/>
            <person name="Lucas S.M."/>
            <person name="Myers R.M."/>
            <person name="Rubin E.M."/>
        </authorList>
    </citation>
    <scope>NUCLEOTIDE SEQUENCE [LARGE SCALE GENOMIC DNA]</scope>
</reference>
<reference key="4">
    <citation type="journal article" date="2004" name="Genome Res.">
        <title>The status, quality, and expansion of the NIH full-length cDNA project: the Mammalian Gene Collection (MGC).</title>
        <authorList>
            <consortium name="The MGC Project Team"/>
        </authorList>
    </citation>
    <scope>NUCLEOTIDE SEQUENCE [LARGE SCALE MRNA]</scope>
    <scope>VARIANT ILE-172</scope>
    <source>
        <tissue>Testis</tissue>
    </source>
</reference>
<reference key="5">
    <citation type="journal article" date="2008" name="Proc. Natl. Acad. Sci. U.S.A.">
        <title>A quantitative atlas of mitotic phosphorylation.</title>
        <authorList>
            <person name="Dephoure N."/>
            <person name="Zhou C."/>
            <person name="Villen J."/>
            <person name="Beausoleil S.A."/>
            <person name="Bakalarski C.E."/>
            <person name="Elledge S.J."/>
            <person name="Gygi S.P."/>
        </authorList>
    </citation>
    <scope>PHOSPHORYLATION [LARGE SCALE ANALYSIS] AT SER-687</scope>
    <scope>IDENTIFICATION BY MASS SPECTROMETRY [LARGE SCALE ANALYSIS]</scope>
    <source>
        <tissue>Cervix carcinoma</tissue>
    </source>
</reference>
<reference key="6">
    <citation type="journal article" date="2009" name="Proc. Natl. Acad. Sci. U.S.A.">
        <title>Inositol pyrophosphate mediated pyrophosphorylation of AP3B1 regulates HIV-1 Gag release.</title>
        <authorList>
            <person name="Azevedo C."/>
            <person name="Burton A."/>
            <person name="Ruiz-Mateos E."/>
            <person name="Marsh M."/>
            <person name="Saiardi A."/>
        </authorList>
    </citation>
    <scope>INTERACTION WITH AP3B1</scope>
</reference>
<reference key="7">
    <citation type="journal article" date="2010" name="Dev. Cell">
        <title>Pitchfork regulates primary cilia disassembly and left-right asymmetry.</title>
        <authorList>
            <person name="Kinzel D."/>
            <person name="Boldt K."/>
            <person name="Davis E.E."/>
            <person name="Burtscher I."/>
            <person name="Trumbach D."/>
            <person name="Diplas B."/>
            <person name="Attie-Bitach T."/>
            <person name="Wurst W."/>
            <person name="Katsanis N."/>
            <person name="Ueffing M."/>
            <person name="Lickert H."/>
        </authorList>
    </citation>
    <scope>INTERACTION WITH CIMAP3</scope>
</reference>
<reference key="8">
    <citation type="journal article" date="2010" name="Sci. Signal.">
        <title>Quantitative phosphoproteomics reveals widespread full phosphorylation site occupancy during mitosis.</title>
        <authorList>
            <person name="Olsen J.V."/>
            <person name="Vermeulen M."/>
            <person name="Santamaria A."/>
            <person name="Kumar C."/>
            <person name="Miller M.L."/>
            <person name="Jensen L.J."/>
            <person name="Gnad F."/>
            <person name="Cox J."/>
            <person name="Jensen T.S."/>
            <person name="Nigg E.A."/>
            <person name="Brunak S."/>
            <person name="Mann M."/>
        </authorList>
    </citation>
    <scope>PHOSPHORYLATION [LARGE SCALE ANALYSIS] AT SER-687</scope>
    <scope>IDENTIFICATION BY MASS SPECTROMETRY [LARGE SCALE ANALYSIS]</scope>
    <source>
        <tissue>Cervix carcinoma</tissue>
    </source>
</reference>
<reference key="9">
    <citation type="journal article" date="2011" name="BMC Syst. Biol.">
        <title>Initial characterization of the human central proteome.</title>
        <authorList>
            <person name="Burkard T.R."/>
            <person name="Planyavsky M."/>
            <person name="Kaupe I."/>
            <person name="Breitwieser F.P."/>
            <person name="Buerckstuemmer T."/>
            <person name="Bennett K.L."/>
            <person name="Superti-Furga G."/>
            <person name="Colinge J."/>
        </authorList>
    </citation>
    <scope>IDENTIFICATION BY MASS SPECTROMETRY [LARGE SCALE ANALYSIS]</scope>
</reference>
<reference key="10">
    <citation type="journal article" date="2012" name="Cell. Mol. Life Sci.">
        <title>Neuronal ceroid lipofuscinosis protein CLN3 interacts with motor proteins and modifies location of late endosomal compartments.</title>
        <authorList>
            <person name="Uusi-Rauva K."/>
            <person name="Kyttala A."/>
            <person name="van der Kant R."/>
            <person name="Vesa J."/>
            <person name="Tanhuanpaa K."/>
            <person name="Neefjes J."/>
            <person name="Olkkonen V.M."/>
            <person name="Jalanko A."/>
        </authorList>
    </citation>
    <scope>INTERACTION WITH CLN3</scope>
</reference>
<reference key="11">
    <citation type="journal article" date="2013" name="EMBO J.">
        <title>Kif3a interacts with Dynactin subunit p150 Glued to organize centriole subdistal appendages.</title>
        <authorList>
            <person name="Kodani A."/>
            <person name="Salome Sirerol-Piquer M."/>
            <person name="Seol A."/>
            <person name="Garcia-Verdugo J.M."/>
            <person name="Reiter J.F."/>
        </authorList>
    </citation>
    <scope>SUBCELLULAR LOCATION</scope>
</reference>
<reference key="12">
    <citation type="journal article" date="2016" name="J. Biol. Chem.">
        <title>Tumor suppressor folliculin regulates mTORC1 through primary cilia.</title>
        <authorList>
            <person name="Zhong M."/>
            <person name="Zhao X."/>
            <person name="Li J."/>
            <person name="Yuan W."/>
            <person name="Yan G."/>
            <person name="Tong M."/>
            <person name="Guo S."/>
            <person name="Zhu Y."/>
            <person name="Jiang Y."/>
            <person name="Liu Y."/>
            <person name="Jiang Y."/>
        </authorList>
    </citation>
    <scope>INTERACTION WITH FLCN</scope>
</reference>
<proteinExistence type="evidence at protein level"/>
<name>KIF3A_HUMAN</name>
<comment type="function">
    <text evidence="1">Microtubule-based anterograde translocator for membranous organelles. Plus end-directed microtubule sliding activity in vitro. Plays a role in primary cilia formation. Plays a role in centriole cohesion and subdistal appendage organization and function. Regulates the formation of the subdistal appendage via recruitment of DCTN1 to the centriole. Also required for ciliary basal feet formation and microtubule anchoring to mother centriole.</text>
</comment>
<comment type="subunit">
    <text evidence="1 6 7 8 10">Heterodimer of KIF3A and KIF3B (By similarity). Interacts with CIMAP3 (PubMed:20643351). Interacts with CLN3 (PubMed:22261744). Interacts with DCTN1 (By similarity). Interacts with FLCN (PubMed:27072130). Interacts with AP3B1 (PubMed:19934039).</text>
</comment>
<comment type="interaction">
    <interactant intactId="EBI-1104844">
        <id>Q9Y496</id>
    </interactant>
    <interactant intactId="EBI-15816315">
        <id>O00203-1</id>
        <label>AP3B1</label>
    </interactant>
    <organismsDiffer>false</organismsDiffer>
    <experiments>5</experiments>
</comment>
<comment type="interaction">
    <interactant intactId="EBI-1104844">
        <id>Q9Y496</id>
    </interactant>
    <interactant intactId="EBI-529989">
        <id>Q9NRI5</id>
        <label>DISC1</label>
    </interactant>
    <organismsDiffer>false</organismsDiffer>
    <experiments>5</experiments>
</comment>
<comment type="interaction">
    <interactant intactId="EBI-1104844">
        <id>Q9Y496</id>
    </interactant>
    <interactant intactId="EBI-954040">
        <id>Q92845</id>
        <label>KIFAP3</label>
    </interactant>
    <organismsDiffer>false</organismsDiffer>
    <experiments>11</experiments>
</comment>
<comment type="interaction">
    <interactant intactId="EBI-1104844">
        <id>Q9Y496</id>
    </interactant>
    <interactant intactId="EBI-1387068">
        <id>Q9BXF6</id>
        <label>RAB11FIP5</label>
    </interactant>
    <organismsDiffer>false</organismsDiffer>
    <experiments>2</experiments>
</comment>
<comment type="subcellular location">
    <subcellularLocation>
        <location evidence="11">Cytoplasm</location>
        <location evidence="11">Cytoskeleton</location>
    </subcellularLocation>
    <subcellularLocation>
        <location evidence="1">Cell projection</location>
        <location evidence="1">Cilium</location>
    </subcellularLocation>
    <subcellularLocation>
        <location evidence="9">Cytoplasm</location>
        <location evidence="9">Cytoskeleton</location>
        <location evidence="9">Microtubule organizing center</location>
        <location evidence="9">Centrosome</location>
        <location evidence="9">Centriole</location>
    </subcellularLocation>
    <text evidence="9">Localizes to the subdistal appendage region of the centriole.</text>
</comment>
<comment type="similarity">
    <text evidence="3">Belongs to the TRAFAC class myosin-kinesin ATPase superfamily. Kinesin family. Kinesin II subfamily.</text>
</comment>
<comment type="sequence caution" evidence="11">
    <conflict type="erroneous gene model prediction">
        <sequence resource="EMBL-CDS" id="AAC04475"/>
    </conflict>
</comment>
<comment type="sequence caution" evidence="11">
    <conflict type="erroneous initiation">
        <sequence resource="EMBL-CDS" id="BAD93017"/>
    </conflict>
    <text>Extended N-terminus.</text>
</comment>
<dbReference type="EMBL" id="AF041853">
    <property type="protein sequence ID" value="AAC72294.1"/>
    <property type="molecule type" value="mRNA"/>
</dbReference>
<dbReference type="EMBL" id="AB209780">
    <property type="protein sequence ID" value="BAD93017.1"/>
    <property type="status" value="ALT_INIT"/>
    <property type="molecule type" value="mRNA"/>
</dbReference>
<dbReference type="EMBL" id="AC004039">
    <property type="status" value="NOT_ANNOTATED_CDS"/>
    <property type="molecule type" value="Genomic_DNA"/>
</dbReference>
<dbReference type="EMBL" id="AC004237">
    <property type="protein sequence ID" value="AAC04475.1"/>
    <property type="status" value="ALT_SEQ"/>
    <property type="molecule type" value="Genomic_DNA"/>
</dbReference>
<dbReference type="EMBL" id="BC045542">
    <property type="protein sequence ID" value="AAH45542.1"/>
    <property type="molecule type" value="mRNA"/>
</dbReference>
<dbReference type="CCDS" id="CCDS34235.1"/>
<dbReference type="RefSeq" id="NP_001287720.1">
    <property type="nucleotide sequence ID" value="NM_001300791.1"/>
</dbReference>
<dbReference type="RefSeq" id="NP_001287721.1">
    <property type="nucleotide sequence ID" value="NM_001300792.1"/>
</dbReference>
<dbReference type="RefSeq" id="NP_008985.3">
    <property type="nucleotide sequence ID" value="NM_007054.6"/>
</dbReference>
<dbReference type="SMR" id="Q9Y496"/>
<dbReference type="BioGRID" id="116300">
    <property type="interactions" value="134"/>
</dbReference>
<dbReference type="ComplexPortal" id="CPX-3138">
    <property type="entry name" value="KIF3 complex variant AB"/>
</dbReference>
<dbReference type="ComplexPortal" id="CPX-3199">
    <property type="entry name" value="KIF3 complex variant AC"/>
</dbReference>
<dbReference type="ComplexPortal" id="CPX-3200">
    <property type="entry name" value="KIF3 complex variant AC-KAP3"/>
</dbReference>
<dbReference type="ComplexPortal" id="CPX-3201">
    <property type="entry name" value="KIF3 complex variant AB-KAP3"/>
</dbReference>
<dbReference type="CORUM" id="Q9Y496"/>
<dbReference type="DIP" id="DIP-33237N"/>
<dbReference type="FunCoup" id="Q9Y496">
    <property type="interactions" value="1492"/>
</dbReference>
<dbReference type="IntAct" id="Q9Y496">
    <property type="interactions" value="107"/>
</dbReference>
<dbReference type="MINT" id="Q9Y496"/>
<dbReference type="STRING" id="9606.ENSP00000385808"/>
<dbReference type="BindingDB" id="Q9Y496"/>
<dbReference type="ChEMBL" id="CHEMBL5544"/>
<dbReference type="GlyGen" id="Q9Y496">
    <property type="glycosylation" value="2 sites, 1 O-linked glycan (2 sites)"/>
</dbReference>
<dbReference type="iPTMnet" id="Q9Y496"/>
<dbReference type="MetOSite" id="Q9Y496"/>
<dbReference type="PhosphoSitePlus" id="Q9Y496"/>
<dbReference type="BioMuta" id="KIF3A"/>
<dbReference type="DMDM" id="296439481"/>
<dbReference type="jPOST" id="Q9Y496"/>
<dbReference type="MassIVE" id="Q9Y496"/>
<dbReference type="PaxDb" id="9606-ENSP00000385808"/>
<dbReference type="PeptideAtlas" id="Q9Y496"/>
<dbReference type="ProteomicsDB" id="86139"/>
<dbReference type="Pumba" id="Q9Y496"/>
<dbReference type="Antibodypedia" id="14507">
    <property type="antibodies" value="227 antibodies from 32 providers"/>
</dbReference>
<dbReference type="DNASU" id="11127"/>
<dbReference type="Ensembl" id="ENST00000378746.8">
    <property type="protein sequence ID" value="ENSP00000368020.3"/>
    <property type="gene ID" value="ENSG00000131437.16"/>
</dbReference>
<dbReference type="GeneID" id="11127"/>
<dbReference type="KEGG" id="hsa:11127"/>
<dbReference type="UCSC" id="uc003kxo.4">
    <property type="organism name" value="human"/>
</dbReference>
<dbReference type="AGR" id="HGNC:6319"/>
<dbReference type="CTD" id="11127"/>
<dbReference type="DisGeNET" id="11127"/>
<dbReference type="GeneCards" id="KIF3A"/>
<dbReference type="HGNC" id="HGNC:6319">
    <property type="gene designation" value="KIF3A"/>
</dbReference>
<dbReference type="HPA" id="ENSG00000131437">
    <property type="expression patterns" value="Tissue enhanced (brain, retina)"/>
</dbReference>
<dbReference type="MIM" id="604683">
    <property type="type" value="gene"/>
</dbReference>
<dbReference type="neXtProt" id="NX_Q9Y496"/>
<dbReference type="OpenTargets" id="ENSG00000131437"/>
<dbReference type="PharmGKB" id="PA30102"/>
<dbReference type="VEuPathDB" id="HostDB:ENSG00000131437"/>
<dbReference type="eggNOG" id="KOG4280">
    <property type="taxonomic scope" value="Eukaryota"/>
</dbReference>
<dbReference type="GeneTree" id="ENSGT00940000156386"/>
<dbReference type="HOGENOM" id="CLU_001485_22_3_1"/>
<dbReference type="InParanoid" id="Q9Y496"/>
<dbReference type="OrthoDB" id="3176171at2759"/>
<dbReference type="PAN-GO" id="Q9Y496">
    <property type="GO annotations" value="7 GO annotations based on evolutionary models"/>
</dbReference>
<dbReference type="PhylomeDB" id="Q9Y496"/>
<dbReference type="TreeFam" id="TF105223"/>
<dbReference type="PathwayCommons" id="Q9Y496"/>
<dbReference type="Reactome" id="R-HSA-1445148">
    <property type="pathway name" value="Translocation of SLC2A4 (GLUT4) to the plasma membrane"/>
</dbReference>
<dbReference type="Reactome" id="R-HSA-2132295">
    <property type="pathway name" value="MHC class II antigen presentation"/>
</dbReference>
<dbReference type="Reactome" id="R-HSA-5610787">
    <property type="pathway name" value="Hedgehog 'off' state"/>
</dbReference>
<dbReference type="Reactome" id="R-HSA-5620924">
    <property type="pathway name" value="Intraflagellar transport"/>
</dbReference>
<dbReference type="Reactome" id="R-HSA-5635838">
    <property type="pathway name" value="Activation of SMO"/>
</dbReference>
<dbReference type="Reactome" id="R-HSA-6811434">
    <property type="pathway name" value="COPI-dependent Golgi-to-ER retrograde traffic"/>
</dbReference>
<dbReference type="Reactome" id="R-HSA-983189">
    <property type="pathway name" value="Kinesins"/>
</dbReference>
<dbReference type="SignaLink" id="Q9Y496"/>
<dbReference type="SIGNOR" id="Q9Y496"/>
<dbReference type="BioGRID-ORCS" id="11127">
    <property type="hits" value="19 hits in 1152 CRISPR screens"/>
</dbReference>
<dbReference type="CD-CODE" id="8C2F96ED">
    <property type="entry name" value="Centrosome"/>
</dbReference>
<dbReference type="CD-CODE" id="FB4E32DD">
    <property type="entry name" value="Presynaptic clusters and postsynaptic densities"/>
</dbReference>
<dbReference type="ChiTaRS" id="KIF3A">
    <property type="organism name" value="human"/>
</dbReference>
<dbReference type="GeneWiki" id="KIF3A"/>
<dbReference type="GenomeRNAi" id="11127"/>
<dbReference type="Pharos" id="Q9Y496">
    <property type="development level" value="Tbio"/>
</dbReference>
<dbReference type="PRO" id="PR:Q9Y496"/>
<dbReference type="Proteomes" id="UP000005640">
    <property type="component" value="Chromosome 5"/>
</dbReference>
<dbReference type="RNAct" id="Q9Y496">
    <property type="molecule type" value="protein"/>
</dbReference>
<dbReference type="Bgee" id="ENSG00000131437">
    <property type="expression patterns" value="Expressed in Brodmann (1909) area 23 and 181 other cell types or tissues"/>
</dbReference>
<dbReference type="ExpressionAtlas" id="Q9Y496">
    <property type="expression patterns" value="baseline and differential"/>
</dbReference>
<dbReference type="GO" id="GO:1904115">
    <property type="term" value="C:axon cytoplasm"/>
    <property type="evidence" value="ECO:0007669"/>
    <property type="project" value="GOC"/>
</dbReference>
<dbReference type="GO" id="GO:0005814">
    <property type="term" value="C:centriole"/>
    <property type="evidence" value="ECO:0000314"/>
    <property type="project" value="UniProtKB"/>
</dbReference>
<dbReference type="GO" id="GO:0005813">
    <property type="term" value="C:centrosome"/>
    <property type="evidence" value="ECO:0000314"/>
    <property type="project" value="BHF-UCL"/>
</dbReference>
<dbReference type="GO" id="GO:0097542">
    <property type="term" value="C:ciliary tip"/>
    <property type="evidence" value="ECO:0000304"/>
    <property type="project" value="Reactome"/>
</dbReference>
<dbReference type="GO" id="GO:0005929">
    <property type="term" value="C:cilium"/>
    <property type="evidence" value="ECO:0000250"/>
    <property type="project" value="UniProtKB"/>
</dbReference>
<dbReference type="GO" id="GO:0005737">
    <property type="term" value="C:cytoplasm"/>
    <property type="evidence" value="ECO:0000318"/>
    <property type="project" value="GO_Central"/>
</dbReference>
<dbReference type="GO" id="GO:0005829">
    <property type="term" value="C:cytosol"/>
    <property type="evidence" value="ECO:0000304"/>
    <property type="project" value="Reactome"/>
</dbReference>
<dbReference type="GO" id="GO:0070062">
    <property type="term" value="C:extracellular exosome"/>
    <property type="evidence" value="ECO:0007005"/>
    <property type="project" value="UniProtKB"/>
</dbReference>
<dbReference type="GO" id="GO:0005871">
    <property type="term" value="C:kinesin complex"/>
    <property type="evidence" value="ECO:0000318"/>
    <property type="project" value="GO_Central"/>
</dbReference>
<dbReference type="GO" id="GO:0016939">
    <property type="term" value="C:kinesin II complex"/>
    <property type="evidence" value="ECO:0000314"/>
    <property type="project" value="BHF-UCL"/>
</dbReference>
<dbReference type="GO" id="GO:0005874">
    <property type="term" value="C:microtubule"/>
    <property type="evidence" value="ECO:0000318"/>
    <property type="project" value="GO_Central"/>
</dbReference>
<dbReference type="GO" id="GO:0015630">
    <property type="term" value="C:microtubule cytoskeleton"/>
    <property type="evidence" value="ECO:0000314"/>
    <property type="project" value="BHF-UCL"/>
</dbReference>
<dbReference type="GO" id="GO:0005524">
    <property type="term" value="F:ATP binding"/>
    <property type="evidence" value="ECO:0007669"/>
    <property type="project" value="UniProtKB-KW"/>
</dbReference>
<dbReference type="GO" id="GO:0016887">
    <property type="term" value="F:ATP hydrolysis activity"/>
    <property type="evidence" value="ECO:0000318"/>
    <property type="project" value="GO_Central"/>
</dbReference>
<dbReference type="GO" id="GO:0008017">
    <property type="term" value="F:microtubule binding"/>
    <property type="evidence" value="ECO:0000318"/>
    <property type="project" value="GO_Central"/>
</dbReference>
<dbReference type="GO" id="GO:0003777">
    <property type="term" value="F:microtubule motor activity"/>
    <property type="evidence" value="ECO:0000318"/>
    <property type="project" value="GO_Central"/>
</dbReference>
<dbReference type="GO" id="GO:0008574">
    <property type="term" value="F:plus-end-directed microtubule motor activity"/>
    <property type="evidence" value="ECO:0000304"/>
    <property type="project" value="BHF-UCL"/>
</dbReference>
<dbReference type="GO" id="GO:0019903">
    <property type="term" value="F:protein phosphatase binding"/>
    <property type="evidence" value="ECO:0000353"/>
    <property type="project" value="BHF-UCL"/>
</dbReference>
<dbReference type="GO" id="GO:0031267">
    <property type="term" value="F:small GTPase binding"/>
    <property type="evidence" value="ECO:0000353"/>
    <property type="project" value="ParkinsonsUK-UCL"/>
</dbReference>
<dbReference type="GO" id="GO:0030507">
    <property type="term" value="F:spectrin binding"/>
    <property type="evidence" value="ECO:0000314"/>
    <property type="project" value="MGI"/>
</dbReference>
<dbReference type="GO" id="GO:0008089">
    <property type="term" value="P:anterograde axonal transport"/>
    <property type="evidence" value="ECO:0000318"/>
    <property type="project" value="GO_Central"/>
</dbReference>
<dbReference type="GO" id="GO:0010457">
    <property type="term" value="P:centriole-centriole cohesion"/>
    <property type="evidence" value="ECO:0000250"/>
    <property type="project" value="UniProtKB"/>
</dbReference>
<dbReference type="GO" id="GO:0060271">
    <property type="term" value="P:cilium assembly"/>
    <property type="evidence" value="ECO:0000250"/>
    <property type="project" value="UniProtKB"/>
</dbReference>
<dbReference type="GO" id="GO:0034454">
    <property type="term" value="P:microtubule anchoring at centrosome"/>
    <property type="evidence" value="ECO:0000250"/>
    <property type="project" value="UniProtKB"/>
</dbReference>
<dbReference type="GO" id="GO:0006996">
    <property type="term" value="P:organelle organization"/>
    <property type="evidence" value="ECO:0000304"/>
    <property type="project" value="ProtInc"/>
</dbReference>
<dbReference type="GO" id="GO:0072383">
    <property type="term" value="P:plus-end-directed vesicle transport along microtubule"/>
    <property type="evidence" value="ECO:0000304"/>
    <property type="project" value="BHF-UCL"/>
</dbReference>
<dbReference type="GO" id="GO:1902414">
    <property type="term" value="P:protein localization to cell junction"/>
    <property type="evidence" value="ECO:0000315"/>
    <property type="project" value="BHF-UCL"/>
</dbReference>
<dbReference type="GO" id="GO:0015031">
    <property type="term" value="P:protein transport"/>
    <property type="evidence" value="ECO:0000315"/>
    <property type="project" value="BHF-UCL"/>
</dbReference>
<dbReference type="CDD" id="cd01371">
    <property type="entry name" value="KISc_KIF3"/>
    <property type="match status" value="1"/>
</dbReference>
<dbReference type="FunFam" id="3.40.850.10:FF:000028">
    <property type="entry name" value="Kinesin-like protein"/>
    <property type="match status" value="1"/>
</dbReference>
<dbReference type="Gene3D" id="3.40.850.10">
    <property type="entry name" value="Kinesin motor domain"/>
    <property type="match status" value="1"/>
</dbReference>
<dbReference type="InterPro" id="IPR027640">
    <property type="entry name" value="Kinesin-like_fam"/>
</dbReference>
<dbReference type="InterPro" id="IPR019821">
    <property type="entry name" value="Kinesin_motor_CS"/>
</dbReference>
<dbReference type="InterPro" id="IPR001752">
    <property type="entry name" value="Kinesin_motor_dom"/>
</dbReference>
<dbReference type="InterPro" id="IPR036961">
    <property type="entry name" value="Kinesin_motor_dom_sf"/>
</dbReference>
<dbReference type="InterPro" id="IPR027417">
    <property type="entry name" value="P-loop_NTPase"/>
</dbReference>
<dbReference type="PANTHER" id="PTHR47969">
    <property type="entry name" value="CHROMOSOME-ASSOCIATED KINESIN KIF4A-RELATED"/>
    <property type="match status" value="1"/>
</dbReference>
<dbReference type="PANTHER" id="PTHR47969:SF21">
    <property type="entry name" value="KINESIN-LIKE PROTEIN"/>
    <property type="match status" value="1"/>
</dbReference>
<dbReference type="Pfam" id="PF00225">
    <property type="entry name" value="Kinesin"/>
    <property type="match status" value="1"/>
</dbReference>
<dbReference type="PRINTS" id="PR00380">
    <property type="entry name" value="KINESINHEAVY"/>
</dbReference>
<dbReference type="SMART" id="SM00129">
    <property type="entry name" value="KISc"/>
    <property type="match status" value="1"/>
</dbReference>
<dbReference type="SUPFAM" id="SSF52540">
    <property type="entry name" value="P-loop containing nucleoside triphosphate hydrolases"/>
    <property type="match status" value="1"/>
</dbReference>
<dbReference type="PROSITE" id="PS00411">
    <property type="entry name" value="KINESIN_MOTOR_1"/>
    <property type="match status" value="1"/>
</dbReference>
<dbReference type="PROSITE" id="PS50067">
    <property type="entry name" value="KINESIN_MOTOR_2"/>
    <property type="match status" value="1"/>
</dbReference>
<accession>Q9Y496</accession>
<accession>A8MSW9</accession>
<accession>Q59EN1</accession>
<accession>Q86XE9</accession>
<accession>Q9Y6V4</accession>
<organism>
    <name type="scientific">Homo sapiens</name>
    <name type="common">Human</name>
    <dbReference type="NCBI Taxonomy" id="9606"/>
    <lineage>
        <taxon>Eukaryota</taxon>
        <taxon>Metazoa</taxon>
        <taxon>Chordata</taxon>
        <taxon>Craniata</taxon>
        <taxon>Vertebrata</taxon>
        <taxon>Euteleostomi</taxon>
        <taxon>Mammalia</taxon>
        <taxon>Eutheria</taxon>
        <taxon>Euarchontoglires</taxon>
        <taxon>Primates</taxon>
        <taxon>Haplorrhini</taxon>
        <taxon>Catarrhini</taxon>
        <taxon>Hominidae</taxon>
        <taxon>Homo</taxon>
    </lineage>
</organism>
<feature type="chain" id="PRO_0000125393" description="Kinesin-like protein KIF3A">
    <location>
        <begin position="1"/>
        <end position="699"/>
    </location>
</feature>
<feature type="domain" description="Kinesin motor" evidence="3">
    <location>
        <begin position="14"/>
        <end position="345"/>
    </location>
</feature>
<feature type="region of interest" description="Disordered" evidence="4">
    <location>
        <begin position="372"/>
        <end position="421"/>
    </location>
</feature>
<feature type="region of interest" description="Disordered" evidence="4">
    <location>
        <begin position="663"/>
        <end position="699"/>
    </location>
</feature>
<feature type="region of interest" description="Globular">
    <location>
        <begin position="697"/>
        <end position="699"/>
    </location>
</feature>
<feature type="coiled-coil region" evidence="2">
    <location>
        <begin position="355"/>
        <end position="590"/>
    </location>
</feature>
<feature type="compositionally biased region" description="Acidic residues" evidence="4">
    <location>
        <begin position="376"/>
        <end position="400"/>
    </location>
</feature>
<feature type="compositionally biased region" description="Basic residues" evidence="4">
    <location>
        <begin position="672"/>
        <end position="687"/>
    </location>
</feature>
<feature type="binding site" evidence="3">
    <location>
        <begin position="100"/>
        <end position="107"/>
    </location>
    <ligand>
        <name>ATP</name>
        <dbReference type="ChEBI" id="CHEBI:30616"/>
    </ligand>
</feature>
<feature type="modified residue" description="Phosphoserine" evidence="12 13">
    <location>
        <position position="687"/>
    </location>
</feature>
<feature type="sequence variant" id="VAR_055319" description="In dbSNP:rs17854353." evidence="5">
    <original>K</original>
    <variation>I</variation>
    <location>
        <position position="172"/>
    </location>
</feature>
<feature type="sequence conflict" description="In Ref. 4; AAH45542." evidence="11" ref="4">
    <original>E</original>
    <variation>G</variation>
    <location>
        <position position="151"/>
    </location>
</feature>
<feature type="sequence conflict" description="In Ref. 1; AAC72294." evidence="11" ref="1">
    <original>E</original>
    <variation>A</variation>
    <location>
        <position position="170"/>
    </location>
</feature>
<feature type="sequence conflict" description="In Ref. 2; BAD93017." evidence="11" ref="2">
    <original>R</original>
    <variation>RDQA</variation>
    <location>
        <position position="409"/>
    </location>
</feature>
<feature type="sequence conflict" description="In Ref. 4; AAH45542." evidence="11" ref="4">
    <original>R</original>
    <variation>RDQT</variation>
    <location>
        <position position="409"/>
    </location>
</feature>
<feature type="sequence conflict" description="In Ref. 1; AAC72294." evidence="11" ref="1">
    <original>R</original>
    <variation>RIQI</variation>
    <location>
        <position position="409"/>
    </location>
</feature>
<gene>
    <name type="primary">KIF3A</name>
    <name type="synonym">KIF3</name>
</gene>
<evidence type="ECO:0000250" key="1">
    <source>
        <dbReference type="UniProtKB" id="P28741"/>
    </source>
</evidence>
<evidence type="ECO:0000255" key="2"/>
<evidence type="ECO:0000255" key="3">
    <source>
        <dbReference type="PROSITE-ProRule" id="PRU00283"/>
    </source>
</evidence>
<evidence type="ECO:0000256" key="4">
    <source>
        <dbReference type="SAM" id="MobiDB-lite"/>
    </source>
</evidence>
<evidence type="ECO:0000269" key="5">
    <source>
    </source>
</evidence>
<evidence type="ECO:0000269" key="6">
    <source>
    </source>
</evidence>
<evidence type="ECO:0000269" key="7">
    <source>
    </source>
</evidence>
<evidence type="ECO:0000269" key="8">
    <source>
    </source>
</evidence>
<evidence type="ECO:0000269" key="9">
    <source>
    </source>
</evidence>
<evidence type="ECO:0000269" key="10">
    <source>
    </source>
</evidence>
<evidence type="ECO:0000305" key="11"/>
<evidence type="ECO:0007744" key="12">
    <source>
    </source>
</evidence>
<evidence type="ECO:0007744" key="13">
    <source>
    </source>
</evidence>